<reference key="1">
    <citation type="journal article" date="2008" name="BMC Genomics">
        <title>Genomics of an extreme psychrophile, Psychromonas ingrahamii.</title>
        <authorList>
            <person name="Riley M."/>
            <person name="Staley J.T."/>
            <person name="Danchin A."/>
            <person name="Wang T.Z."/>
            <person name="Brettin T.S."/>
            <person name="Hauser L.J."/>
            <person name="Land M.L."/>
            <person name="Thompson L.S."/>
        </authorList>
    </citation>
    <scope>NUCLEOTIDE SEQUENCE [LARGE SCALE GENOMIC DNA]</scope>
    <source>
        <strain>DSM 17664 / CCUG 51855 / 37</strain>
    </source>
</reference>
<dbReference type="EC" id="7.1.2.2" evidence="1"/>
<dbReference type="EMBL" id="CP000510">
    <property type="protein sequence ID" value="ABM05406.1"/>
    <property type="molecule type" value="Genomic_DNA"/>
</dbReference>
<dbReference type="RefSeq" id="WP_011771954.1">
    <property type="nucleotide sequence ID" value="NC_008709.1"/>
</dbReference>
<dbReference type="SMR" id="A1T0Z1"/>
<dbReference type="STRING" id="357804.Ping_3732"/>
<dbReference type="KEGG" id="pin:Ping_3732"/>
<dbReference type="eggNOG" id="COG0056">
    <property type="taxonomic scope" value="Bacteria"/>
</dbReference>
<dbReference type="HOGENOM" id="CLU_010091_2_1_6"/>
<dbReference type="OrthoDB" id="9803053at2"/>
<dbReference type="Proteomes" id="UP000000639">
    <property type="component" value="Chromosome"/>
</dbReference>
<dbReference type="GO" id="GO:0005886">
    <property type="term" value="C:plasma membrane"/>
    <property type="evidence" value="ECO:0007669"/>
    <property type="project" value="UniProtKB-SubCell"/>
</dbReference>
<dbReference type="GO" id="GO:0045259">
    <property type="term" value="C:proton-transporting ATP synthase complex"/>
    <property type="evidence" value="ECO:0007669"/>
    <property type="project" value="UniProtKB-KW"/>
</dbReference>
<dbReference type="GO" id="GO:0043531">
    <property type="term" value="F:ADP binding"/>
    <property type="evidence" value="ECO:0007669"/>
    <property type="project" value="TreeGrafter"/>
</dbReference>
<dbReference type="GO" id="GO:0005524">
    <property type="term" value="F:ATP binding"/>
    <property type="evidence" value="ECO:0007669"/>
    <property type="project" value="UniProtKB-UniRule"/>
</dbReference>
<dbReference type="GO" id="GO:0046933">
    <property type="term" value="F:proton-transporting ATP synthase activity, rotational mechanism"/>
    <property type="evidence" value="ECO:0007669"/>
    <property type="project" value="UniProtKB-UniRule"/>
</dbReference>
<dbReference type="CDD" id="cd18113">
    <property type="entry name" value="ATP-synt_F1_alpha_C"/>
    <property type="match status" value="1"/>
</dbReference>
<dbReference type="CDD" id="cd18116">
    <property type="entry name" value="ATP-synt_F1_alpha_N"/>
    <property type="match status" value="1"/>
</dbReference>
<dbReference type="CDD" id="cd01132">
    <property type="entry name" value="F1-ATPase_alpha_CD"/>
    <property type="match status" value="1"/>
</dbReference>
<dbReference type="FunFam" id="1.20.150.20:FF:000001">
    <property type="entry name" value="ATP synthase subunit alpha"/>
    <property type="match status" value="1"/>
</dbReference>
<dbReference type="FunFam" id="2.40.30.20:FF:000001">
    <property type="entry name" value="ATP synthase subunit alpha"/>
    <property type="match status" value="1"/>
</dbReference>
<dbReference type="FunFam" id="3.40.50.300:FF:000002">
    <property type="entry name" value="ATP synthase subunit alpha"/>
    <property type="match status" value="1"/>
</dbReference>
<dbReference type="Gene3D" id="2.40.30.20">
    <property type="match status" value="1"/>
</dbReference>
<dbReference type="Gene3D" id="1.20.150.20">
    <property type="entry name" value="ATP synthase alpha/beta chain, C-terminal domain"/>
    <property type="match status" value="1"/>
</dbReference>
<dbReference type="Gene3D" id="3.40.50.300">
    <property type="entry name" value="P-loop containing nucleotide triphosphate hydrolases"/>
    <property type="match status" value="1"/>
</dbReference>
<dbReference type="HAMAP" id="MF_01346">
    <property type="entry name" value="ATP_synth_alpha_bact"/>
    <property type="match status" value="1"/>
</dbReference>
<dbReference type="InterPro" id="IPR023366">
    <property type="entry name" value="ATP_synth_asu-like_sf"/>
</dbReference>
<dbReference type="InterPro" id="IPR000793">
    <property type="entry name" value="ATP_synth_asu_C"/>
</dbReference>
<dbReference type="InterPro" id="IPR038376">
    <property type="entry name" value="ATP_synth_asu_C_sf"/>
</dbReference>
<dbReference type="InterPro" id="IPR033732">
    <property type="entry name" value="ATP_synth_F1_a_nt-bd_dom"/>
</dbReference>
<dbReference type="InterPro" id="IPR005294">
    <property type="entry name" value="ATP_synth_F1_asu"/>
</dbReference>
<dbReference type="InterPro" id="IPR020003">
    <property type="entry name" value="ATPase_a/bsu_AS"/>
</dbReference>
<dbReference type="InterPro" id="IPR004100">
    <property type="entry name" value="ATPase_F1/V1/A1_a/bsu_N"/>
</dbReference>
<dbReference type="InterPro" id="IPR036121">
    <property type="entry name" value="ATPase_F1/V1/A1_a/bsu_N_sf"/>
</dbReference>
<dbReference type="InterPro" id="IPR000194">
    <property type="entry name" value="ATPase_F1/V1/A1_a/bsu_nucl-bd"/>
</dbReference>
<dbReference type="InterPro" id="IPR027417">
    <property type="entry name" value="P-loop_NTPase"/>
</dbReference>
<dbReference type="NCBIfam" id="TIGR00962">
    <property type="entry name" value="atpA"/>
    <property type="match status" value="1"/>
</dbReference>
<dbReference type="NCBIfam" id="NF009884">
    <property type="entry name" value="PRK13343.1"/>
    <property type="match status" value="1"/>
</dbReference>
<dbReference type="PANTHER" id="PTHR48082">
    <property type="entry name" value="ATP SYNTHASE SUBUNIT ALPHA, MITOCHONDRIAL"/>
    <property type="match status" value="1"/>
</dbReference>
<dbReference type="PANTHER" id="PTHR48082:SF2">
    <property type="entry name" value="ATP SYNTHASE SUBUNIT ALPHA, MITOCHONDRIAL"/>
    <property type="match status" value="1"/>
</dbReference>
<dbReference type="Pfam" id="PF00006">
    <property type="entry name" value="ATP-synt_ab"/>
    <property type="match status" value="1"/>
</dbReference>
<dbReference type="Pfam" id="PF00306">
    <property type="entry name" value="ATP-synt_ab_C"/>
    <property type="match status" value="1"/>
</dbReference>
<dbReference type="Pfam" id="PF02874">
    <property type="entry name" value="ATP-synt_ab_N"/>
    <property type="match status" value="1"/>
</dbReference>
<dbReference type="SUPFAM" id="SSF47917">
    <property type="entry name" value="C-terminal domain of alpha and beta subunits of F1 ATP synthase"/>
    <property type="match status" value="1"/>
</dbReference>
<dbReference type="SUPFAM" id="SSF50615">
    <property type="entry name" value="N-terminal domain of alpha and beta subunits of F1 ATP synthase"/>
    <property type="match status" value="1"/>
</dbReference>
<dbReference type="SUPFAM" id="SSF52540">
    <property type="entry name" value="P-loop containing nucleoside triphosphate hydrolases"/>
    <property type="match status" value="1"/>
</dbReference>
<dbReference type="PROSITE" id="PS00152">
    <property type="entry name" value="ATPASE_ALPHA_BETA"/>
    <property type="match status" value="1"/>
</dbReference>
<comment type="function">
    <text evidence="1">Produces ATP from ADP in the presence of a proton gradient across the membrane. The alpha chain is a regulatory subunit.</text>
</comment>
<comment type="catalytic activity">
    <reaction evidence="1">
        <text>ATP + H2O + 4 H(+)(in) = ADP + phosphate + 5 H(+)(out)</text>
        <dbReference type="Rhea" id="RHEA:57720"/>
        <dbReference type="ChEBI" id="CHEBI:15377"/>
        <dbReference type="ChEBI" id="CHEBI:15378"/>
        <dbReference type="ChEBI" id="CHEBI:30616"/>
        <dbReference type="ChEBI" id="CHEBI:43474"/>
        <dbReference type="ChEBI" id="CHEBI:456216"/>
        <dbReference type="EC" id="7.1.2.2"/>
    </reaction>
</comment>
<comment type="subunit">
    <text evidence="1">F-type ATPases have 2 components, CF(1) - the catalytic core - and CF(0) - the membrane proton channel. CF(1) has five subunits: alpha(3), beta(3), gamma(1), delta(1), epsilon(1). CF(0) has three main subunits: a(1), b(2) and c(9-12). The alpha and beta chains form an alternating ring which encloses part of the gamma chain. CF(1) is attached to CF(0) by a central stalk formed by the gamma and epsilon chains, while a peripheral stalk is formed by the delta and b chains.</text>
</comment>
<comment type="subcellular location">
    <subcellularLocation>
        <location evidence="1">Cell inner membrane</location>
        <topology evidence="1">Peripheral membrane protein</topology>
    </subcellularLocation>
</comment>
<comment type="similarity">
    <text evidence="1">Belongs to the ATPase alpha/beta chains family.</text>
</comment>
<name>ATPA2_PSYIN</name>
<sequence>MQLNSTEISDLIKQRIGKFEAVSEARNEGTIVSVSDGIVRINGLAECMQGEMIELPNGGFAMALNLERDSVGAVVMGPFRDLREGQKVKSTGRILEVPVGKGLLGRVVNTLGAPIDGKGPIENDGYSPIEVIAPGVIDRKSVDQPVQTGWKSIDSMVPIGRGQRELIIGDRQVGKTAIAIDAIINQKHTGLFSIYVAIGQKASTIANVVNKLEEHGALENTIVVVASASETAALQYLAPYAGCSMGEYFRDRGEDALIVYDDLSKQAVAYRQISLLLKRPPGREAYPGDVFYLHSRLLERASRVSAAYVEAFTKGAVKGKTGSLTALPIIETQGGDVSAFVPTNVISITDGQIFLTTELFNSGIRPAVDPGISVSRVGGSAQCKVIKKLAGGIRTALAQYRELAAFAQFASDLDETTRKQLDHGKKVTELMKQKQYAPMSVAEQALSLFSAEKGYLTDVDVEKVLDFESSLISYAKTEHAEFYAQLNETGDYSKEIEGQFHAILETFKATQTW</sequence>
<keyword id="KW-0066">ATP synthesis</keyword>
<keyword id="KW-0067">ATP-binding</keyword>
<keyword id="KW-0997">Cell inner membrane</keyword>
<keyword id="KW-1003">Cell membrane</keyword>
<keyword id="KW-0139">CF(1)</keyword>
<keyword id="KW-0375">Hydrogen ion transport</keyword>
<keyword id="KW-0406">Ion transport</keyword>
<keyword id="KW-0472">Membrane</keyword>
<keyword id="KW-0547">Nucleotide-binding</keyword>
<keyword id="KW-1185">Reference proteome</keyword>
<keyword id="KW-1278">Translocase</keyword>
<keyword id="KW-0813">Transport</keyword>
<accession>A1T0Z1</accession>
<protein>
    <recommendedName>
        <fullName evidence="1">ATP synthase subunit alpha 2</fullName>
        <ecNumber evidence="1">7.1.2.2</ecNumber>
    </recommendedName>
    <alternativeName>
        <fullName evidence="1">ATP synthase F1 sector subunit alpha 2</fullName>
    </alternativeName>
    <alternativeName>
        <fullName evidence="1">F-ATPase subunit alpha 2</fullName>
    </alternativeName>
</protein>
<proteinExistence type="inferred from homology"/>
<evidence type="ECO:0000255" key="1">
    <source>
        <dbReference type="HAMAP-Rule" id="MF_01346"/>
    </source>
</evidence>
<organism>
    <name type="scientific">Psychromonas ingrahamii (strain DSM 17664 / CCUG 51855 / 37)</name>
    <dbReference type="NCBI Taxonomy" id="357804"/>
    <lineage>
        <taxon>Bacteria</taxon>
        <taxon>Pseudomonadati</taxon>
        <taxon>Pseudomonadota</taxon>
        <taxon>Gammaproteobacteria</taxon>
        <taxon>Alteromonadales</taxon>
        <taxon>Psychromonadaceae</taxon>
        <taxon>Psychromonas</taxon>
    </lineage>
</organism>
<gene>
    <name evidence="1" type="primary">atpA2</name>
    <name type="ordered locus">Ping_3732</name>
</gene>
<feature type="chain" id="PRO_0000339049" description="ATP synthase subunit alpha 2">
    <location>
        <begin position="1"/>
        <end position="513"/>
    </location>
</feature>
<feature type="binding site" evidence="1">
    <location>
        <begin position="169"/>
        <end position="176"/>
    </location>
    <ligand>
        <name>ATP</name>
        <dbReference type="ChEBI" id="CHEBI:30616"/>
    </ligand>
</feature>
<feature type="site" description="Required for activity" evidence="1">
    <location>
        <position position="373"/>
    </location>
</feature>